<keyword id="KW-0963">Cytoplasm</keyword>
<keyword id="KW-0238">DNA-binding</keyword>
<keyword id="KW-0678">Repressor</keyword>
<keyword id="KW-0804">Transcription</keyword>
<keyword id="KW-0805">Transcription regulation</keyword>
<keyword id="KW-0843">Virulence</keyword>
<evidence type="ECO:0000250" key="1"/>
<evidence type="ECO:0000255" key="2"/>
<evidence type="ECO:0000305" key="3"/>
<gene>
    <name type="primary">sarX</name>
    <name type="ordered locus">SAUSA300_0654</name>
</gene>
<proteinExistence type="inferred from homology"/>
<organism>
    <name type="scientific">Staphylococcus aureus (strain USA300)</name>
    <dbReference type="NCBI Taxonomy" id="367830"/>
    <lineage>
        <taxon>Bacteria</taxon>
        <taxon>Bacillati</taxon>
        <taxon>Bacillota</taxon>
        <taxon>Bacilli</taxon>
        <taxon>Bacillales</taxon>
        <taxon>Staphylococcaceae</taxon>
        <taxon>Staphylococcus</taxon>
    </lineage>
</organism>
<accession>Q2FIX1</accession>
<sequence>MNTEKLETLLGFYKQYKALSEYIDKKYKLSLNDLAVLDLTMKHCKDEKVLMQSFLKTAMDELDLSRTKLLVSIRRLIEKERLSKVRSSKDERKIYIYLNNDDISKFNALFEDVEQFLNI</sequence>
<dbReference type="EMBL" id="CP000255">
    <property type="protein sequence ID" value="ABD21615.1"/>
    <property type="status" value="ALT_INIT"/>
    <property type="molecule type" value="Genomic_DNA"/>
</dbReference>
<dbReference type="RefSeq" id="WP_001090985.1">
    <property type="nucleotide sequence ID" value="NZ_CP027476.1"/>
</dbReference>
<dbReference type="SMR" id="Q2FIX1"/>
<dbReference type="KEGG" id="saa:SAUSA300_0654"/>
<dbReference type="HOGENOM" id="CLU_166896_0_0_9"/>
<dbReference type="Proteomes" id="UP000001939">
    <property type="component" value="Chromosome"/>
</dbReference>
<dbReference type="GO" id="GO:0005737">
    <property type="term" value="C:cytoplasm"/>
    <property type="evidence" value="ECO:0007669"/>
    <property type="project" value="UniProtKB-SubCell"/>
</dbReference>
<dbReference type="GO" id="GO:0003677">
    <property type="term" value="F:DNA binding"/>
    <property type="evidence" value="ECO:0007669"/>
    <property type="project" value="UniProtKB-KW"/>
</dbReference>
<dbReference type="GO" id="GO:0006355">
    <property type="term" value="P:regulation of DNA-templated transcription"/>
    <property type="evidence" value="ECO:0007669"/>
    <property type="project" value="InterPro"/>
</dbReference>
<dbReference type="Gene3D" id="1.10.10.10">
    <property type="entry name" value="Winged helix-like DNA-binding domain superfamily/Winged helix DNA-binding domain"/>
    <property type="match status" value="1"/>
</dbReference>
<dbReference type="InterPro" id="IPR010166">
    <property type="entry name" value="SarA/Rot_dom"/>
</dbReference>
<dbReference type="InterPro" id="IPR055166">
    <property type="entry name" value="Transc_reg_Sar_Rot_HTH"/>
</dbReference>
<dbReference type="InterPro" id="IPR036388">
    <property type="entry name" value="WH-like_DNA-bd_sf"/>
</dbReference>
<dbReference type="InterPro" id="IPR036390">
    <property type="entry name" value="WH_DNA-bd_sf"/>
</dbReference>
<dbReference type="NCBIfam" id="TIGR01889">
    <property type="entry name" value="Staph_reg_Sar"/>
    <property type="match status" value="1"/>
</dbReference>
<dbReference type="Pfam" id="PF22381">
    <property type="entry name" value="Staph_reg_Sar_Rot"/>
    <property type="match status" value="1"/>
</dbReference>
<dbReference type="SUPFAM" id="SSF46785">
    <property type="entry name" value="Winged helix' DNA-binding domain"/>
    <property type="match status" value="1"/>
</dbReference>
<name>SARX_STAA3</name>
<feature type="chain" id="PRO_0000259137" description="HTH-type transcriptional regulator SarX">
    <location>
        <begin position="1"/>
        <end position="119"/>
    </location>
</feature>
<feature type="DNA-binding region" description="H-T-H motif" evidence="2">
    <location>
        <begin position="55"/>
        <end position="78"/>
    </location>
</feature>
<protein>
    <recommendedName>
        <fullName>HTH-type transcriptional regulator SarX</fullName>
    </recommendedName>
    <alternativeName>
        <fullName>Staphylococcal accessory regulator X</fullName>
    </alternativeName>
</protein>
<reference key="1">
    <citation type="journal article" date="2006" name="Lancet">
        <title>Complete genome sequence of USA300, an epidemic clone of community-acquired meticillin-resistant Staphylococcus aureus.</title>
        <authorList>
            <person name="Diep B.A."/>
            <person name="Gill S.R."/>
            <person name="Chang R.F."/>
            <person name="Phan T.H."/>
            <person name="Chen J.H."/>
            <person name="Davidson M.G."/>
            <person name="Lin F."/>
            <person name="Lin J."/>
            <person name="Carleton H.A."/>
            <person name="Mongodin E.F."/>
            <person name="Sensabaugh G.F."/>
            <person name="Perdreau-Remington F."/>
        </authorList>
    </citation>
    <scope>NUCLEOTIDE SEQUENCE [LARGE SCALE GENOMIC DNA]</scope>
    <source>
        <strain>USA300</strain>
    </source>
</reference>
<comment type="function">
    <text evidence="1">Involved in the regulation of virulence genes. Acts as a repressor of the agr locus and consequently targets genes regulated by the agr system such as sspA, hla and hlb. Binds directly to the agr promoter region (By similarity).</text>
</comment>
<comment type="subcellular location">
    <subcellularLocation>
        <location evidence="1">Cytoplasm</location>
    </subcellularLocation>
</comment>
<comment type="similarity">
    <text evidence="3">Belongs to the SarA family.</text>
</comment>
<comment type="sequence caution" evidence="3">
    <conflict type="erroneous initiation">
        <sequence resource="EMBL-CDS" id="ABD21615"/>
    </conflict>
</comment>